<dbReference type="EMBL" id="CP000422">
    <property type="protein sequence ID" value="ABJ68513.1"/>
    <property type="molecule type" value="Genomic_DNA"/>
</dbReference>
<dbReference type="RefSeq" id="WP_002833270.1">
    <property type="nucleotide sequence ID" value="NC_008525.1"/>
</dbReference>
<dbReference type="SMR" id="Q03E59"/>
<dbReference type="STRING" id="278197.PEPE_1482"/>
<dbReference type="GeneID" id="33061625"/>
<dbReference type="KEGG" id="ppe:PEPE_1482"/>
<dbReference type="eggNOG" id="COG0353">
    <property type="taxonomic scope" value="Bacteria"/>
</dbReference>
<dbReference type="HOGENOM" id="CLU_060739_1_0_9"/>
<dbReference type="OrthoDB" id="9802672at2"/>
<dbReference type="Proteomes" id="UP000000773">
    <property type="component" value="Chromosome"/>
</dbReference>
<dbReference type="GO" id="GO:0003677">
    <property type="term" value="F:DNA binding"/>
    <property type="evidence" value="ECO:0007669"/>
    <property type="project" value="UniProtKB-UniRule"/>
</dbReference>
<dbReference type="GO" id="GO:0008270">
    <property type="term" value="F:zinc ion binding"/>
    <property type="evidence" value="ECO:0007669"/>
    <property type="project" value="UniProtKB-KW"/>
</dbReference>
<dbReference type="GO" id="GO:0006310">
    <property type="term" value="P:DNA recombination"/>
    <property type="evidence" value="ECO:0007669"/>
    <property type="project" value="UniProtKB-UniRule"/>
</dbReference>
<dbReference type="GO" id="GO:0006281">
    <property type="term" value="P:DNA repair"/>
    <property type="evidence" value="ECO:0007669"/>
    <property type="project" value="UniProtKB-UniRule"/>
</dbReference>
<dbReference type="CDD" id="cd01025">
    <property type="entry name" value="TOPRIM_recR"/>
    <property type="match status" value="1"/>
</dbReference>
<dbReference type="Gene3D" id="3.30.60.80">
    <property type="match status" value="1"/>
</dbReference>
<dbReference type="Gene3D" id="3.40.1360.10">
    <property type="match status" value="1"/>
</dbReference>
<dbReference type="Gene3D" id="6.10.250.240">
    <property type="match status" value="1"/>
</dbReference>
<dbReference type="Gene3D" id="1.10.8.420">
    <property type="entry name" value="RecR Domain 1"/>
    <property type="match status" value="1"/>
</dbReference>
<dbReference type="HAMAP" id="MF_00017">
    <property type="entry name" value="RecR"/>
    <property type="match status" value="1"/>
</dbReference>
<dbReference type="InterPro" id="IPR000093">
    <property type="entry name" value="DNA_Rcmb_RecR"/>
</dbReference>
<dbReference type="InterPro" id="IPR023627">
    <property type="entry name" value="Rcmb_RecR"/>
</dbReference>
<dbReference type="InterPro" id="IPR015967">
    <property type="entry name" value="Rcmb_RecR_Znf"/>
</dbReference>
<dbReference type="InterPro" id="IPR006171">
    <property type="entry name" value="TOPRIM_dom"/>
</dbReference>
<dbReference type="InterPro" id="IPR034137">
    <property type="entry name" value="TOPRIM_RecR"/>
</dbReference>
<dbReference type="NCBIfam" id="TIGR00615">
    <property type="entry name" value="recR"/>
    <property type="match status" value="1"/>
</dbReference>
<dbReference type="PANTHER" id="PTHR30446">
    <property type="entry name" value="RECOMBINATION PROTEIN RECR"/>
    <property type="match status" value="1"/>
</dbReference>
<dbReference type="PANTHER" id="PTHR30446:SF0">
    <property type="entry name" value="RECOMBINATION PROTEIN RECR"/>
    <property type="match status" value="1"/>
</dbReference>
<dbReference type="Pfam" id="PF21175">
    <property type="entry name" value="RecR_C"/>
    <property type="match status" value="1"/>
</dbReference>
<dbReference type="Pfam" id="PF21176">
    <property type="entry name" value="RecR_HhH"/>
    <property type="match status" value="1"/>
</dbReference>
<dbReference type="Pfam" id="PF02132">
    <property type="entry name" value="RecR_ZnF"/>
    <property type="match status" value="1"/>
</dbReference>
<dbReference type="Pfam" id="PF13662">
    <property type="entry name" value="Toprim_4"/>
    <property type="match status" value="1"/>
</dbReference>
<dbReference type="SMART" id="SM00493">
    <property type="entry name" value="TOPRIM"/>
    <property type="match status" value="1"/>
</dbReference>
<dbReference type="SUPFAM" id="SSF111304">
    <property type="entry name" value="Recombination protein RecR"/>
    <property type="match status" value="1"/>
</dbReference>
<dbReference type="PROSITE" id="PS01300">
    <property type="entry name" value="RECR"/>
    <property type="match status" value="1"/>
</dbReference>
<dbReference type="PROSITE" id="PS50880">
    <property type="entry name" value="TOPRIM"/>
    <property type="match status" value="1"/>
</dbReference>
<name>RECR_PEDPA</name>
<organism>
    <name type="scientific">Pediococcus pentosaceus (strain ATCC 25745 / CCUG 21536 / LMG 10740 / 183-1w)</name>
    <dbReference type="NCBI Taxonomy" id="278197"/>
    <lineage>
        <taxon>Bacteria</taxon>
        <taxon>Bacillati</taxon>
        <taxon>Bacillota</taxon>
        <taxon>Bacilli</taxon>
        <taxon>Lactobacillales</taxon>
        <taxon>Lactobacillaceae</taxon>
        <taxon>Pediococcus</taxon>
    </lineage>
</organism>
<reference key="1">
    <citation type="journal article" date="2006" name="Proc. Natl. Acad. Sci. U.S.A.">
        <title>Comparative genomics of the lactic acid bacteria.</title>
        <authorList>
            <person name="Makarova K.S."/>
            <person name="Slesarev A."/>
            <person name="Wolf Y.I."/>
            <person name="Sorokin A."/>
            <person name="Mirkin B."/>
            <person name="Koonin E.V."/>
            <person name="Pavlov A."/>
            <person name="Pavlova N."/>
            <person name="Karamychev V."/>
            <person name="Polouchine N."/>
            <person name="Shakhova V."/>
            <person name="Grigoriev I."/>
            <person name="Lou Y."/>
            <person name="Rohksar D."/>
            <person name="Lucas S."/>
            <person name="Huang K."/>
            <person name="Goodstein D.M."/>
            <person name="Hawkins T."/>
            <person name="Plengvidhya V."/>
            <person name="Welker D."/>
            <person name="Hughes J."/>
            <person name="Goh Y."/>
            <person name="Benson A."/>
            <person name="Baldwin K."/>
            <person name="Lee J.-H."/>
            <person name="Diaz-Muniz I."/>
            <person name="Dosti B."/>
            <person name="Smeianov V."/>
            <person name="Wechter W."/>
            <person name="Barabote R."/>
            <person name="Lorca G."/>
            <person name="Altermann E."/>
            <person name="Barrangou R."/>
            <person name="Ganesan B."/>
            <person name="Xie Y."/>
            <person name="Rawsthorne H."/>
            <person name="Tamir D."/>
            <person name="Parker C."/>
            <person name="Breidt F."/>
            <person name="Broadbent J.R."/>
            <person name="Hutkins R."/>
            <person name="O'Sullivan D."/>
            <person name="Steele J."/>
            <person name="Unlu G."/>
            <person name="Saier M.H. Jr."/>
            <person name="Klaenhammer T."/>
            <person name="Richardson P."/>
            <person name="Kozyavkin S."/>
            <person name="Weimer B.C."/>
            <person name="Mills D.A."/>
        </authorList>
    </citation>
    <scope>NUCLEOTIDE SEQUENCE [LARGE SCALE GENOMIC DNA]</scope>
    <source>
        <strain>ATCC 25745 / CCUG 21536 / LMG 10740 / 183-1w</strain>
    </source>
</reference>
<keyword id="KW-0227">DNA damage</keyword>
<keyword id="KW-0233">DNA recombination</keyword>
<keyword id="KW-0234">DNA repair</keyword>
<keyword id="KW-0479">Metal-binding</keyword>
<keyword id="KW-0862">Zinc</keyword>
<keyword id="KW-0863">Zinc-finger</keyword>
<gene>
    <name evidence="1" type="primary">recR</name>
    <name type="ordered locus">PEPE_1482</name>
</gene>
<proteinExistence type="inferred from homology"/>
<comment type="function">
    <text evidence="1">May play a role in DNA repair. It seems to be involved in an RecBC-independent recombinational process of DNA repair. It may act with RecF and RecO.</text>
</comment>
<comment type="similarity">
    <text evidence="1">Belongs to the RecR family.</text>
</comment>
<evidence type="ECO:0000255" key="1">
    <source>
        <dbReference type="HAMAP-Rule" id="MF_00017"/>
    </source>
</evidence>
<accession>Q03E59</accession>
<feature type="chain" id="PRO_1000001572" description="Recombination protein RecR">
    <location>
        <begin position="1"/>
        <end position="199"/>
    </location>
</feature>
<feature type="domain" description="Toprim" evidence="1">
    <location>
        <begin position="80"/>
        <end position="176"/>
    </location>
</feature>
<feature type="zinc finger region" description="C4-type" evidence="1">
    <location>
        <begin position="57"/>
        <end position="72"/>
    </location>
</feature>
<sequence length="199" mass="22024">MQYPEPIAKLIDSFMKLPGIGYKTATRLAFFTLDMEKDDVTEFAKALISAQRDLSFCSICGNITEDDPCDICQDPSRDQKAVLVVEDSKDVMSMEQMKEYHGLYHVLHGVLSPMDGKGPEDINIAALLTRLQKNEAIKEVIIATNATPEGEATAMYISRLVKPSGIKVTRLAHGLSVGSDIEYADQMTLYKAVEGRTEM</sequence>
<protein>
    <recommendedName>
        <fullName evidence="1">Recombination protein RecR</fullName>
    </recommendedName>
</protein>